<organism>
    <name type="scientific">Danio rerio</name>
    <name type="common">Zebrafish</name>
    <name type="synonym">Brachydanio rerio</name>
    <dbReference type="NCBI Taxonomy" id="7955"/>
    <lineage>
        <taxon>Eukaryota</taxon>
        <taxon>Metazoa</taxon>
        <taxon>Chordata</taxon>
        <taxon>Craniata</taxon>
        <taxon>Vertebrata</taxon>
        <taxon>Euteleostomi</taxon>
        <taxon>Actinopterygii</taxon>
        <taxon>Neopterygii</taxon>
        <taxon>Teleostei</taxon>
        <taxon>Ostariophysi</taxon>
        <taxon>Cypriniformes</taxon>
        <taxon>Danionidae</taxon>
        <taxon>Danioninae</taxon>
        <taxon>Danio</taxon>
    </lineage>
</organism>
<feature type="signal peptide" evidence="2">
    <location>
        <begin position="1"/>
        <end position="16"/>
    </location>
</feature>
<feature type="chain" id="PRO_0000357038" description="Galectin-3-binding protein A">
    <location>
        <begin position="17"/>
        <end position="567"/>
    </location>
</feature>
<feature type="domain" description="SRCR" evidence="3">
    <location>
        <begin position="34"/>
        <end position="133"/>
    </location>
</feature>
<feature type="domain" description="BACK">
    <location>
        <begin position="272"/>
        <end position="374"/>
    </location>
</feature>
<feature type="glycosylation site" description="N-linked (GlcNAc...) asparagine" evidence="2">
    <location>
        <position position="137"/>
    </location>
</feature>
<feature type="glycosylation site" description="N-linked (GlcNAc...) asparagine" evidence="2">
    <location>
        <position position="197"/>
    </location>
</feature>
<feature type="glycosylation site" description="N-linked (GlcNAc...) asparagine" evidence="2">
    <location>
        <position position="200"/>
    </location>
</feature>
<feature type="glycosylation site" description="N-linked (GlcNAc...) asparagine" evidence="2">
    <location>
        <position position="204"/>
    </location>
</feature>
<feature type="glycosylation site" description="N-linked (GlcNAc...) asparagine" evidence="2">
    <location>
        <position position="412"/>
    </location>
</feature>
<feature type="glycosylation site" description="N-linked (GlcNAc...) asparagine" evidence="2">
    <location>
        <position position="432"/>
    </location>
</feature>
<feature type="glycosylation site" description="N-linked (GlcNAc...) asparagine" evidence="2">
    <location>
        <position position="543"/>
    </location>
</feature>
<feature type="disulfide bond" evidence="3">
    <location>
        <begin position="58"/>
        <end position="122"/>
    </location>
</feature>
<feature type="disulfide bond" evidence="3">
    <location>
        <begin position="71"/>
        <end position="132"/>
    </location>
</feature>
<feature type="disulfide bond" evidence="3">
    <location>
        <begin position="102"/>
        <end position="112"/>
    </location>
</feature>
<reference key="1">
    <citation type="submission" date="2006-03" db="EMBL/GenBank/DDBJ databases">
        <authorList>
            <consortium name="NIH - Zebrafish Gene Collection (ZGC) project"/>
        </authorList>
    </citation>
    <scope>NUCLEOTIDE SEQUENCE [LARGE SCALE MRNA]</scope>
</reference>
<comment type="function">
    <text evidence="1">Promotes integrin-mediated cell adhesion.</text>
</comment>
<comment type="subcellular location">
    <subcellularLocation>
        <location evidence="1">Secreted</location>
    </subcellularLocation>
    <subcellularLocation>
        <location evidence="1">Secreted</location>
        <location evidence="1">Extracellular space</location>
        <location evidence="1">Extracellular matrix</location>
    </subcellularLocation>
</comment>
<accession>Q24JV9</accession>
<proteinExistence type="evidence at transcript level"/>
<dbReference type="EMBL" id="BC114268">
    <property type="protein sequence ID" value="AAI14269.1"/>
    <property type="molecule type" value="mRNA"/>
</dbReference>
<dbReference type="RefSeq" id="NP_001035130.1">
    <property type="nucleotide sequence ID" value="NM_001040041.1"/>
</dbReference>
<dbReference type="SMR" id="Q24JV9"/>
<dbReference type="FunCoup" id="Q24JV9">
    <property type="interactions" value="699"/>
</dbReference>
<dbReference type="STRING" id="7955.ENSDARP00000055087"/>
<dbReference type="GlyCosmos" id="Q24JV9">
    <property type="glycosylation" value="7 sites, No reported glycans"/>
</dbReference>
<dbReference type="PaxDb" id="7955-ENSDARP00000055087"/>
<dbReference type="GeneID" id="677742"/>
<dbReference type="KEGG" id="dre:677742"/>
<dbReference type="AGR" id="ZFIN:ZDB-GENE-060331-57"/>
<dbReference type="CTD" id="677742"/>
<dbReference type="ZFIN" id="ZDB-GENE-060331-57">
    <property type="gene designation" value="lgals3bp.3"/>
</dbReference>
<dbReference type="eggNOG" id="ENOG502QU48">
    <property type="taxonomic scope" value="Eukaryota"/>
</dbReference>
<dbReference type="InParanoid" id="Q24JV9"/>
<dbReference type="OrthoDB" id="25028at2759"/>
<dbReference type="PhylomeDB" id="Q24JV9"/>
<dbReference type="Reactome" id="R-DRE-114608">
    <property type="pathway name" value="Platelet degranulation"/>
</dbReference>
<dbReference type="PRO" id="PR:Q24JV9"/>
<dbReference type="Proteomes" id="UP000000437">
    <property type="component" value="Chromosome 3"/>
</dbReference>
<dbReference type="GO" id="GO:0005576">
    <property type="term" value="C:extracellular region"/>
    <property type="evidence" value="ECO:0007669"/>
    <property type="project" value="UniProtKB-SubCell"/>
</dbReference>
<dbReference type="GO" id="GO:0016020">
    <property type="term" value="C:membrane"/>
    <property type="evidence" value="ECO:0007669"/>
    <property type="project" value="InterPro"/>
</dbReference>
<dbReference type="GO" id="GO:0007155">
    <property type="term" value="P:cell adhesion"/>
    <property type="evidence" value="ECO:0007669"/>
    <property type="project" value="UniProtKB-KW"/>
</dbReference>
<dbReference type="CDD" id="cd18496">
    <property type="entry name" value="BACK_LGALS3BP"/>
    <property type="match status" value="1"/>
</dbReference>
<dbReference type="FunFam" id="3.10.250.10:FF:000011">
    <property type="entry name" value="Scavenger receptor class A member 5"/>
    <property type="match status" value="1"/>
</dbReference>
<dbReference type="Gene3D" id="1.25.40.420">
    <property type="match status" value="1"/>
</dbReference>
<dbReference type="Gene3D" id="3.30.710.10">
    <property type="entry name" value="Potassium Channel Kv1.1, Chain A"/>
    <property type="match status" value="1"/>
</dbReference>
<dbReference type="Gene3D" id="3.10.250.10">
    <property type="entry name" value="SRCR-like domain"/>
    <property type="match status" value="1"/>
</dbReference>
<dbReference type="InterPro" id="IPR011705">
    <property type="entry name" value="BACK"/>
</dbReference>
<dbReference type="InterPro" id="IPR051481">
    <property type="entry name" value="BTB-POZ/Galectin-3-binding"/>
</dbReference>
<dbReference type="InterPro" id="IPR000210">
    <property type="entry name" value="BTB/POZ_dom"/>
</dbReference>
<dbReference type="InterPro" id="IPR011333">
    <property type="entry name" value="SKP1/BTB/POZ_sf"/>
</dbReference>
<dbReference type="InterPro" id="IPR001190">
    <property type="entry name" value="SRCR"/>
</dbReference>
<dbReference type="InterPro" id="IPR036772">
    <property type="entry name" value="SRCR-like_dom_sf"/>
</dbReference>
<dbReference type="PANTHER" id="PTHR24410:SF16">
    <property type="entry name" value="GALECTIN-3-BINDING PROTEIN"/>
    <property type="match status" value="1"/>
</dbReference>
<dbReference type="PANTHER" id="PTHR24410">
    <property type="entry name" value="HL07962P-RELATED"/>
    <property type="match status" value="1"/>
</dbReference>
<dbReference type="Pfam" id="PF07707">
    <property type="entry name" value="BACK"/>
    <property type="match status" value="1"/>
</dbReference>
<dbReference type="Pfam" id="PF00651">
    <property type="entry name" value="BTB"/>
    <property type="match status" value="1"/>
</dbReference>
<dbReference type="Pfam" id="PF00530">
    <property type="entry name" value="SRCR"/>
    <property type="match status" value="1"/>
</dbReference>
<dbReference type="PRINTS" id="PR00258">
    <property type="entry name" value="SPERACTRCPTR"/>
</dbReference>
<dbReference type="SMART" id="SM00875">
    <property type="entry name" value="BACK"/>
    <property type="match status" value="1"/>
</dbReference>
<dbReference type="SMART" id="SM00202">
    <property type="entry name" value="SR"/>
    <property type="match status" value="1"/>
</dbReference>
<dbReference type="SUPFAM" id="SSF54695">
    <property type="entry name" value="POZ domain"/>
    <property type="match status" value="1"/>
</dbReference>
<dbReference type="SUPFAM" id="SSF56487">
    <property type="entry name" value="SRCR-like"/>
    <property type="match status" value="1"/>
</dbReference>
<dbReference type="PROSITE" id="PS00420">
    <property type="entry name" value="SRCR_1"/>
    <property type="match status" value="1"/>
</dbReference>
<dbReference type="PROSITE" id="PS50287">
    <property type="entry name" value="SRCR_2"/>
    <property type="match status" value="1"/>
</dbReference>
<name>L3BPA_DANRE</name>
<protein>
    <recommendedName>
        <fullName>Galectin-3-binding protein A</fullName>
    </recommendedName>
    <alternativeName>
        <fullName>Lectin galactoside-binding soluble 3-binding protein A</fullName>
    </alternativeName>
</protein>
<keyword id="KW-0130">Cell adhesion</keyword>
<keyword id="KW-1015">Disulfide bond</keyword>
<keyword id="KW-0272">Extracellular matrix</keyword>
<keyword id="KW-0325">Glycoprotein</keyword>
<keyword id="KW-1185">Reference proteome</keyword>
<keyword id="KW-0964">Secreted</keyword>
<keyword id="KW-0732">Signal</keyword>
<evidence type="ECO:0000250" key="1"/>
<evidence type="ECO:0000255" key="2"/>
<evidence type="ECO:0000255" key="3">
    <source>
        <dbReference type="PROSITE-ProRule" id="PRU00196"/>
    </source>
</evidence>
<gene>
    <name type="primary">lgals3bpa</name>
    <name type="synonym">lgals3bp</name>
    <name type="ORF">zgc:136780</name>
</gene>
<sequence>MIMYIIWALLFIPVSAQQWTLFDEQAKPKREGRVRLVGGLPSSGRVEVYHDGQWGTVCDDGWDLAEAQVVCRQLGFPGAVSVASGGQYGEGSGPIWLDDMNCKGSESILSECCFKGWGVNDCTHQEDAGVVCDTGTNATNIRQISVDNSLGLSDDLGLLFDSEDGCDFIIAVQDLGEEAELTLCVHRVILMMYPELNITNDTRNLTVDVSQTCQSHVSALIRYLYTRQIDVSATSAQCLYQLAFIFGVQRLMEDVGRVFTALIPEDNTFQTPVSMYEYGLRTGDLVLQENVLQYLSWNCEFLISSPVWSTVSFEMMDALLQRSDLIVKDEAVLLEALERWIQDKGDQISSDKQASLLSHIRFLLIPVDKLYDIQFSSSALYQNNEKLYLTGLLRGFEFNALPFSKIRNQIDNASSEYLPRIYTGDEWSVFINDTTVSSPYYNYNYYGQSNRIQTFFTSAHPSALYKDQKVQWQAQVFLTLQECSNYGVSCNTLPVARFYGYSNQYSYSNIISYNNRLILTCKNQNNVFHVQEFKNDVAVIPTNSSMGLPNPCPDDYSFRFVVRPQYI</sequence>